<proteinExistence type="inferred from homology"/>
<gene>
    <name evidence="1" type="primary">rplM</name>
    <name type="ordered locus">Cpha266_2012</name>
</gene>
<feature type="chain" id="PRO_1000055365" description="Large ribosomal subunit protein uL13">
    <location>
        <begin position="1"/>
        <end position="149"/>
    </location>
</feature>
<name>RL13_CHLPD</name>
<accession>A1BHZ7</accession>
<evidence type="ECO:0000255" key="1">
    <source>
        <dbReference type="HAMAP-Rule" id="MF_01366"/>
    </source>
</evidence>
<evidence type="ECO:0000305" key="2"/>
<organism>
    <name type="scientific">Chlorobium phaeobacteroides (strain DSM 266 / SMG 266 / 2430)</name>
    <dbReference type="NCBI Taxonomy" id="290317"/>
    <lineage>
        <taxon>Bacteria</taxon>
        <taxon>Pseudomonadati</taxon>
        <taxon>Chlorobiota</taxon>
        <taxon>Chlorobiia</taxon>
        <taxon>Chlorobiales</taxon>
        <taxon>Chlorobiaceae</taxon>
        <taxon>Chlorobium/Pelodictyon group</taxon>
        <taxon>Chlorobium</taxon>
    </lineage>
</organism>
<reference key="1">
    <citation type="submission" date="2006-12" db="EMBL/GenBank/DDBJ databases">
        <title>Complete sequence of Chlorobium phaeobacteroides DSM 266.</title>
        <authorList>
            <consortium name="US DOE Joint Genome Institute"/>
            <person name="Copeland A."/>
            <person name="Lucas S."/>
            <person name="Lapidus A."/>
            <person name="Barry K."/>
            <person name="Detter J.C."/>
            <person name="Glavina del Rio T."/>
            <person name="Hammon N."/>
            <person name="Israni S."/>
            <person name="Pitluck S."/>
            <person name="Goltsman E."/>
            <person name="Schmutz J."/>
            <person name="Larimer F."/>
            <person name="Land M."/>
            <person name="Hauser L."/>
            <person name="Mikhailova N."/>
            <person name="Li T."/>
            <person name="Overmann J."/>
            <person name="Bryant D.A."/>
            <person name="Richardson P."/>
        </authorList>
    </citation>
    <scope>NUCLEOTIDE SEQUENCE [LARGE SCALE GENOMIC DNA]</scope>
    <source>
        <strain>DSM 266 / SMG 266 / 2430</strain>
    </source>
</reference>
<keyword id="KW-1185">Reference proteome</keyword>
<keyword id="KW-0687">Ribonucleoprotein</keyword>
<keyword id="KW-0689">Ribosomal protein</keyword>
<dbReference type="EMBL" id="CP000492">
    <property type="protein sequence ID" value="ABL66024.1"/>
    <property type="molecule type" value="Genomic_DNA"/>
</dbReference>
<dbReference type="RefSeq" id="WP_011745828.1">
    <property type="nucleotide sequence ID" value="NC_008639.1"/>
</dbReference>
<dbReference type="SMR" id="A1BHZ7"/>
<dbReference type="STRING" id="290317.Cpha266_2012"/>
<dbReference type="KEGG" id="cph:Cpha266_2012"/>
<dbReference type="eggNOG" id="COG0102">
    <property type="taxonomic scope" value="Bacteria"/>
</dbReference>
<dbReference type="HOGENOM" id="CLU_082184_2_2_10"/>
<dbReference type="OrthoDB" id="9801330at2"/>
<dbReference type="Proteomes" id="UP000008701">
    <property type="component" value="Chromosome"/>
</dbReference>
<dbReference type="GO" id="GO:0022625">
    <property type="term" value="C:cytosolic large ribosomal subunit"/>
    <property type="evidence" value="ECO:0007669"/>
    <property type="project" value="TreeGrafter"/>
</dbReference>
<dbReference type="GO" id="GO:0003729">
    <property type="term" value="F:mRNA binding"/>
    <property type="evidence" value="ECO:0007669"/>
    <property type="project" value="TreeGrafter"/>
</dbReference>
<dbReference type="GO" id="GO:0003735">
    <property type="term" value="F:structural constituent of ribosome"/>
    <property type="evidence" value="ECO:0007669"/>
    <property type="project" value="InterPro"/>
</dbReference>
<dbReference type="GO" id="GO:0017148">
    <property type="term" value="P:negative regulation of translation"/>
    <property type="evidence" value="ECO:0007669"/>
    <property type="project" value="TreeGrafter"/>
</dbReference>
<dbReference type="GO" id="GO:0006412">
    <property type="term" value="P:translation"/>
    <property type="evidence" value="ECO:0007669"/>
    <property type="project" value="UniProtKB-UniRule"/>
</dbReference>
<dbReference type="CDD" id="cd00392">
    <property type="entry name" value="Ribosomal_L13"/>
    <property type="match status" value="1"/>
</dbReference>
<dbReference type="FunFam" id="3.90.1180.10:FF:000001">
    <property type="entry name" value="50S ribosomal protein L13"/>
    <property type="match status" value="1"/>
</dbReference>
<dbReference type="Gene3D" id="3.90.1180.10">
    <property type="entry name" value="Ribosomal protein L13"/>
    <property type="match status" value="1"/>
</dbReference>
<dbReference type="HAMAP" id="MF_01366">
    <property type="entry name" value="Ribosomal_uL13"/>
    <property type="match status" value="1"/>
</dbReference>
<dbReference type="InterPro" id="IPR005822">
    <property type="entry name" value="Ribosomal_uL13"/>
</dbReference>
<dbReference type="InterPro" id="IPR005823">
    <property type="entry name" value="Ribosomal_uL13_bac-type"/>
</dbReference>
<dbReference type="InterPro" id="IPR036899">
    <property type="entry name" value="Ribosomal_uL13_sf"/>
</dbReference>
<dbReference type="NCBIfam" id="TIGR01066">
    <property type="entry name" value="rplM_bact"/>
    <property type="match status" value="1"/>
</dbReference>
<dbReference type="PANTHER" id="PTHR11545:SF2">
    <property type="entry name" value="LARGE RIBOSOMAL SUBUNIT PROTEIN UL13M"/>
    <property type="match status" value="1"/>
</dbReference>
<dbReference type="PANTHER" id="PTHR11545">
    <property type="entry name" value="RIBOSOMAL PROTEIN L13"/>
    <property type="match status" value="1"/>
</dbReference>
<dbReference type="Pfam" id="PF00572">
    <property type="entry name" value="Ribosomal_L13"/>
    <property type="match status" value="1"/>
</dbReference>
<dbReference type="PIRSF" id="PIRSF002181">
    <property type="entry name" value="Ribosomal_L13"/>
    <property type="match status" value="1"/>
</dbReference>
<dbReference type="SUPFAM" id="SSF52161">
    <property type="entry name" value="Ribosomal protein L13"/>
    <property type="match status" value="1"/>
</dbReference>
<sequence length="149" mass="16735">MSKSLSFKTYSAKPGEVERSWYVIDADGQVLGRMAAEIARVLRGKHKPQFTPHIDTGDFIVVTNAAKIGLSGKKTEQKSYFSHSNYPGGVKFDHVKDLLKKKPEKIIEHAVWGMLPHNNLGRQLFKKLKVYAGPEHPHASQNPVEMKVN</sequence>
<protein>
    <recommendedName>
        <fullName evidence="1">Large ribosomal subunit protein uL13</fullName>
    </recommendedName>
    <alternativeName>
        <fullName evidence="2">50S ribosomal protein L13</fullName>
    </alternativeName>
</protein>
<comment type="function">
    <text evidence="1">This protein is one of the early assembly proteins of the 50S ribosomal subunit, although it is not seen to bind rRNA by itself. It is important during the early stages of 50S assembly.</text>
</comment>
<comment type="subunit">
    <text evidence="1">Part of the 50S ribosomal subunit.</text>
</comment>
<comment type="similarity">
    <text evidence="1">Belongs to the universal ribosomal protein uL13 family.</text>
</comment>